<name>PA2AH_AUSSU</name>
<proteinExistence type="evidence at transcript level"/>
<evidence type="ECO:0000250" key="1"/>
<evidence type="ECO:0000255" key="2"/>
<evidence type="ECO:0000255" key="3">
    <source>
        <dbReference type="PROSITE-ProRule" id="PRU10035"/>
    </source>
</evidence>
<evidence type="ECO:0000255" key="4">
    <source>
        <dbReference type="PROSITE-ProRule" id="PRU10036"/>
    </source>
</evidence>
<evidence type="ECO:0000305" key="5"/>
<sequence length="152" mass="16641">MYPAHLLVLLAVCVSLLGASNIPLPSLDFEQFGKMIQCTIPCEESCLAYMDYGCYCGPGGSGTPSDELDRCCQTHDNCYAEAGKLPACKAMLSEPYNDTYSYSCIERQLTCNDDNDECKAFICNCDRAAVICFSGAPYNDSNYDIGTIEHCK</sequence>
<comment type="function">
    <text evidence="1">Snake venom phospholipase A2 (PLA2) that inhibits collagen-induced platelet aggregation. PLA2 catalyzes the calcium-dependent hydrolysis of the 2-acyl groups in 3-sn-phosphoglycerides (By similarity).</text>
</comment>
<comment type="catalytic activity">
    <reaction evidence="3 4">
        <text>a 1,2-diacyl-sn-glycero-3-phosphocholine + H2O = a 1-acyl-sn-glycero-3-phosphocholine + a fatty acid + H(+)</text>
        <dbReference type="Rhea" id="RHEA:15801"/>
        <dbReference type="ChEBI" id="CHEBI:15377"/>
        <dbReference type="ChEBI" id="CHEBI:15378"/>
        <dbReference type="ChEBI" id="CHEBI:28868"/>
        <dbReference type="ChEBI" id="CHEBI:57643"/>
        <dbReference type="ChEBI" id="CHEBI:58168"/>
        <dbReference type="EC" id="3.1.1.4"/>
    </reaction>
</comment>
<comment type="cofactor">
    <cofactor evidence="1">
        <name>Ca(2+)</name>
        <dbReference type="ChEBI" id="CHEBI:29108"/>
    </cofactor>
    <text evidence="1">Binds 1 Ca(2+) ion.</text>
</comment>
<comment type="subcellular location">
    <subcellularLocation>
        <location evidence="1">Secreted</location>
    </subcellularLocation>
</comment>
<comment type="tissue specificity">
    <text>Expressed by the venom gland.</text>
</comment>
<comment type="similarity">
    <text evidence="5">Belongs to the phospholipase A2 family. Group I subfamily. D49 sub-subfamily.</text>
</comment>
<keyword id="KW-0106">Calcium</keyword>
<keyword id="KW-1015">Disulfide bond</keyword>
<keyword id="KW-1199">Hemostasis impairing toxin</keyword>
<keyword id="KW-0378">Hydrolase</keyword>
<keyword id="KW-0442">Lipid degradation</keyword>
<keyword id="KW-0443">Lipid metabolism</keyword>
<keyword id="KW-0479">Metal-binding</keyword>
<keyword id="KW-1201">Platelet aggregation inhibiting toxin</keyword>
<keyword id="KW-0964">Secreted</keyword>
<keyword id="KW-0732">Signal</keyword>
<keyword id="KW-0800">Toxin</keyword>
<organism>
    <name type="scientific">Austrelaps superbus</name>
    <name type="common">Lowland copperhead snake</name>
    <name type="synonym">Hoplocephalus superbus</name>
    <dbReference type="NCBI Taxonomy" id="29156"/>
    <lineage>
        <taxon>Eukaryota</taxon>
        <taxon>Metazoa</taxon>
        <taxon>Chordata</taxon>
        <taxon>Craniata</taxon>
        <taxon>Vertebrata</taxon>
        <taxon>Euteleostomi</taxon>
        <taxon>Lepidosauria</taxon>
        <taxon>Squamata</taxon>
        <taxon>Bifurcata</taxon>
        <taxon>Unidentata</taxon>
        <taxon>Episquamata</taxon>
        <taxon>Toxicofera</taxon>
        <taxon>Serpentes</taxon>
        <taxon>Colubroidea</taxon>
        <taxon>Elapidae</taxon>
        <taxon>Hydrophiinae</taxon>
        <taxon>Austrelaps</taxon>
    </lineage>
</organism>
<protein>
    <recommendedName>
        <fullName>Acidic phospholipase A2 S17-58</fullName>
        <shortName>svPLA2</shortName>
        <ecNumber>3.1.1.4</ecNumber>
    </recommendedName>
    <alternativeName>
        <fullName>ASPLA17</fullName>
    </alternativeName>
    <alternativeName>
        <fullName>Phosphatidylcholine 2-acylhydrolase</fullName>
    </alternativeName>
</protein>
<dbReference type="EC" id="3.1.1.4"/>
<dbReference type="EMBL" id="AF184143">
    <property type="protein sequence ID" value="AAD56410.1"/>
    <property type="molecule type" value="mRNA"/>
</dbReference>
<dbReference type="SMR" id="Q9PUG7"/>
<dbReference type="GO" id="GO:0005576">
    <property type="term" value="C:extracellular region"/>
    <property type="evidence" value="ECO:0007669"/>
    <property type="project" value="UniProtKB-SubCell"/>
</dbReference>
<dbReference type="GO" id="GO:0005509">
    <property type="term" value="F:calcium ion binding"/>
    <property type="evidence" value="ECO:0007669"/>
    <property type="project" value="InterPro"/>
</dbReference>
<dbReference type="GO" id="GO:0047498">
    <property type="term" value="F:calcium-dependent phospholipase A2 activity"/>
    <property type="evidence" value="ECO:0007669"/>
    <property type="project" value="TreeGrafter"/>
</dbReference>
<dbReference type="GO" id="GO:0005543">
    <property type="term" value="F:phospholipid binding"/>
    <property type="evidence" value="ECO:0007669"/>
    <property type="project" value="TreeGrafter"/>
</dbReference>
<dbReference type="GO" id="GO:0005102">
    <property type="term" value="F:signaling receptor binding"/>
    <property type="evidence" value="ECO:0007669"/>
    <property type="project" value="TreeGrafter"/>
</dbReference>
<dbReference type="GO" id="GO:0090729">
    <property type="term" value="F:toxin activity"/>
    <property type="evidence" value="ECO:0007669"/>
    <property type="project" value="UniProtKB-KW"/>
</dbReference>
<dbReference type="GO" id="GO:0050482">
    <property type="term" value="P:arachidonate secretion"/>
    <property type="evidence" value="ECO:0007669"/>
    <property type="project" value="InterPro"/>
</dbReference>
<dbReference type="GO" id="GO:0006633">
    <property type="term" value="P:fatty acid biosynthetic process"/>
    <property type="evidence" value="ECO:0007669"/>
    <property type="project" value="TreeGrafter"/>
</dbReference>
<dbReference type="GO" id="GO:0016042">
    <property type="term" value="P:lipid catabolic process"/>
    <property type="evidence" value="ECO:0007669"/>
    <property type="project" value="UniProtKB-KW"/>
</dbReference>
<dbReference type="GO" id="GO:0006644">
    <property type="term" value="P:phospholipid metabolic process"/>
    <property type="evidence" value="ECO:0007669"/>
    <property type="project" value="InterPro"/>
</dbReference>
<dbReference type="GO" id="GO:0048146">
    <property type="term" value="P:positive regulation of fibroblast proliferation"/>
    <property type="evidence" value="ECO:0007669"/>
    <property type="project" value="TreeGrafter"/>
</dbReference>
<dbReference type="CDD" id="cd00125">
    <property type="entry name" value="PLA2c"/>
    <property type="match status" value="1"/>
</dbReference>
<dbReference type="FunFam" id="1.20.90.10:FF:000011">
    <property type="entry name" value="Phospholipase A(2)"/>
    <property type="match status" value="1"/>
</dbReference>
<dbReference type="Gene3D" id="1.20.90.10">
    <property type="entry name" value="Phospholipase A2 domain"/>
    <property type="match status" value="1"/>
</dbReference>
<dbReference type="InterPro" id="IPR001211">
    <property type="entry name" value="PLipase_A2"/>
</dbReference>
<dbReference type="InterPro" id="IPR033112">
    <property type="entry name" value="PLipase_A2_Asp_AS"/>
</dbReference>
<dbReference type="InterPro" id="IPR016090">
    <property type="entry name" value="PLipase_A2_dom"/>
</dbReference>
<dbReference type="InterPro" id="IPR036444">
    <property type="entry name" value="PLipase_A2_dom_sf"/>
</dbReference>
<dbReference type="InterPro" id="IPR033113">
    <property type="entry name" value="PLipase_A2_His_AS"/>
</dbReference>
<dbReference type="PANTHER" id="PTHR11716:SF94">
    <property type="entry name" value="PHOSPHOLIPASE A2"/>
    <property type="match status" value="1"/>
</dbReference>
<dbReference type="PANTHER" id="PTHR11716">
    <property type="entry name" value="PHOSPHOLIPASE A2 FAMILY MEMBER"/>
    <property type="match status" value="1"/>
</dbReference>
<dbReference type="Pfam" id="PF00068">
    <property type="entry name" value="Phospholip_A2_1"/>
    <property type="match status" value="1"/>
</dbReference>
<dbReference type="PRINTS" id="PR00389">
    <property type="entry name" value="PHPHLIPASEA2"/>
</dbReference>
<dbReference type="SMART" id="SM00085">
    <property type="entry name" value="PA2c"/>
    <property type="match status" value="1"/>
</dbReference>
<dbReference type="SUPFAM" id="SSF48619">
    <property type="entry name" value="Phospholipase A2, PLA2"/>
    <property type="match status" value="1"/>
</dbReference>
<dbReference type="PROSITE" id="PS00119">
    <property type="entry name" value="PA2_ASP"/>
    <property type="match status" value="1"/>
</dbReference>
<dbReference type="PROSITE" id="PS00118">
    <property type="entry name" value="PA2_HIS"/>
    <property type="match status" value="1"/>
</dbReference>
<reference key="1">
    <citation type="journal article" date="2000" name="Arch. Biochem. Biophys.">
        <title>Phospholipase A(2) with platelet aggregation inhibitor activity from Austrelaps superbus venom: protein purification and cDNA cloning.</title>
        <authorList>
            <person name="Singh S.B."/>
            <person name="Armugam A."/>
            <person name="Kini R.M."/>
            <person name="Jeyaseelan K."/>
        </authorList>
    </citation>
    <scope>NUCLEOTIDE SEQUENCE [MRNA]</scope>
    <source>
        <tissue>Venom gland</tissue>
    </source>
</reference>
<accession>Q9PUG7</accession>
<feature type="signal peptide" evidence="2">
    <location>
        <begin position="1"/>
        <end position="19"/>
    </location>
</feature>
<feature type="propeptide" id="PRO_0000022817" evidence="2">
    <location>
        <begin position="20"/>
        <end position="27"/>
    </location>
</feature>
<feature type="chain" id="PRO_0000022818" description="Acidic phospholipase A2 S17-58">
    <location>
        <begin position="28"/>
        <end position="152"/>
    </location>
</feature>
<feature type="active site" evidence="1">
    <location>
        <position position="75"/>
    </location>
</feature>
<feature type="active site" evidence="1">
    <location>
        <position position="126"/>
    </location>
</feature>
<feature type="binding site" evidence="1">
    <location>
        <position position="55"/>
    </location>
    <ligand>
        <name>Ca(2+)</name>
        <dbReference type="ChEBI" id="CHEBI:29108"/>
    </ligand>
</feature>
<feature type="binding site" evidence="1">
    <location>
        <position position="57"/>
    </location>
    <ligand>
        <name>Ca(2+)</name>
        <dbReference type="ChEBI" id="CHEBI:29108"/>
    </ligand>
</feature>
<feature type="binding site" evidence="1">
    <location>
        <position position="59"/>
    </location>
    <ligand>
        <name>Ca(2+)</name>
        <dbReference type="ChEBI" id="CHEBI:29108"/>
    </ligand>
</feature>
<feature type="binding site" evidence="1">
    <location>
        <position position="76"/>
    </location>
    <ligand>
        <name>Ca(2+)</name>
        <dbReference type="ChEBI" id="CHEBI:29108"/>
    </ligand>
</feature>
<feature type="disulfide bond" evidence="1">
    <location>
        <begin position="38"/>
        <end position="104"/>
    </location>
</feature>
<feature type="disulfide bond" evidence="1">
    <location>
        <begin position="54"/>
        <end position="151"/>
    </location>
</feature>
<feature type="disulfide bond" evidence="1">
    <location>
        <begin position="56"/>
        <end position="72"/>
    </location>
</feature>
<feature type="disulfide bond" evidence="1">
    <location>
        <begin position="71"/>
        <end position="132"/>
    </location>
</feature>
<feature type="disulfide bond" evidence="1">
    <location>
        <begin position="78"/>
        <end position="125"/>
    </location>
</feature>
<feature type="disulfide bond" evidence="1">
    <location>
        <begin position="88"/>
        <end position="118"/>
    </location>
</feature>
<feature type="disulfide bond" evidence="1">
    <location>
        <begin position="111"/>
        <end position="123"/>
    </location>
</feature>